<keyword id="KW-0963">Cytoplasm</keyword>
<keyword id="KW-0238">DNA-binding</keyword>
<keyword id="KW-0804">Transcription</keyword>
<keyword id="KW-0805">Transcription regulation</keyword>
<protein>
    <recommendedName>
        <fullName evidence="1">Probable transcriptional regulatory protein RPA1097</fullName>
    </recommendedName>
</protein>
<name>Y1097_RHOPA</name>
<proteinExistence type="inferred from homology"/>
<dbReference type="EMBL" id="BX572596">
    <property type="protein sequence ID" value="CAE26540.1"/>
    <property type="molecule type" value="Genomic_DNA"/>
</dbReference>
<dbReference type="RefSeq" id="WP_011156661.1">
    <property type="nucleotide sequence ID" value="NZ_CP116810.1"/>
</dbReference>
<dbReference type="SMR" id="P62040"/>
<dbReference type="STRING" id="258594.RPA1097"/>
<dbReference type="GeneID" id="66892118"/>
<dbReference type="eggNOG" id="COG0217">
    <property type="taxonomic scope" value="Bacteria"/>
</dbReference>
<dbReference type="HOGENOM" id="CLU_062974_2_2_5"/>
<dbReference type="PhylomeDB" id="P62040"/>
<dbReference type="GO" id="GO:0005829">
    <property type="term" value="C:cytosol"/>
    <property type="evidence" value="ECO:0007669"/>
    <property type="project" value="TreeGrafter"/>
</dbReference>
<dbReference type="GO" id="GO:0003677">
    <property type="term" value="F:DNA binding"/>
    <property type="evidence" value="ECO:0007669"/>
    <property type="project" value="UniProtKB-UniRule"/>
</dbReference>
<dbReference type="GO" id="GO:0006355">
    <property type="term" value="P:regulation of DNA-templated transcription"/>
    <property type="evidence" value="ECO:0007669"/>
    <property type="project" value="UniProtKB-UniRule"/>
</dbReference>
<dbReference type="FunFam" id="1.10.10.200:FF:000002">
    <property type="entry name" value="Probable transcriptional regulatory protein CLM62_37755"/>
    <property type="match status" value="1"/>
</dbReference>
<dbReference type="Gene3D" id="1.10.10.200">
    <property type="match status" value="1"/>
</dbReference>
<dbReference type="Gene3D" id="3.30.70.980">
    <property type="match status" value="2"/>
</dbReference>
<dbReference type="HAMAP" id="MF_00693">
    <property type="entry name" value="Transcrip_reg_TACO1"/>
    <property type="match status" value="1"/>
</dbReference>
<dbReference type="InterPro" id="IPR017856">
    <property type="entry name" value="Integrase-like_N"/>
</dbReference>
<dbReference type="InterPro" id="IPR048300">
    <property type="entry name" value="TACO1_YebC-like_2nd/3rd_dom"/>
</dbReference>
<dbReference type="InterPro" id="IPR049083">
    <property type="entry name" value="TACO1_YebC_N"/>
</dbReference>
<dbReference type="InterPro" id="IPR002876">
    <property type="entry name" value="Transcrip_reg_TACO1-like"/>
</dbReference>
<dbReference type="InterPro" id="IPR026564">
    <property type="entry name" value="Transcrip_reg_TACO1-like_dom3"/>
</dbReference>
<dbReference type="InterPro" id="IPR029072">
    <property type="entry name" value="YebC-like"/>
</dbReference>
<dbReference type="NCBIfam" id="NF001030">
    <property type="entry name" value="PRK00110.1"/>
    <property type="match status" value="1"/>
</dbReference>
<dbReference type="NCBIfam" id="NF009044">
    <property type="entry name" value="PRK12378.1"/>
    <property type="match status" value="1"/>
</dbReference>
<dbReference type="NCBIfam" id="TIGR01033">
    <property type="entry name" value="YebC/PmpR family DNA-binding transcriptional regulator"/>
    <property type="match status" value="1"/>
</dbReference>
<dbReference type="PANTHER" id="PTHR12532:SF6">
    <property type="entry name" value="TRANSCRIPTIONAL REGULATORY PROTEIN YEBC-RELATED"/>
    <property type="match status" value="1"/>
</dbReference>
<dbReference type="PANTHER" id="PTHR12532">
    <property type="entry name" value="TRANSLATIONAL ACTIVATOR OF CYTOCHROME C OXIDASE 1"/>
    <property type="match status" value="1"/>
</dbReference>
<dbReference type="Pfam" id="PF20772">
    <property type="entry name" value="TACO1_YebC_N"/>
    <property type="match status" value="1"/>
</dbReference>
<dbReference type="Pfam" id="PF01709">
    <property type="entry name" value="Transcrip_reg"/>
    <property type="match status" value="1"/>
</dbReference>
<dbReference type="SUPFAM" id="SSF75625">
    <property type="entry name" value="YebC-like"/>
    <property type="match status" value="1"/>
</dbReference>
<reference key="1">
    <citation type="journal article" date="2004" name="Nat. Biotechnol.">
        <title>Complete genome sequence of the metabolically versatile photosynthetic bacterium Rhodopseudomonas palustris.</title>
        <authorList>
            <person name="Larimer F.W."/>
            <person name="Chain P."/>
            <person name="Hauser L."/>
            <person name="Lamerdin J.E."/>
            <person name="Malfatti S."/>
            <person name="Do L."/>
            <person name="Land M.L."/>
            <person name="Pelletier D.A."/>
            <person name="Beatty J.T."/>
            <person name="Lang A.S."/>
            <person name="Tabita F.R."/>
            <person name="Gibson J.L."/>
            <person name="Hanson T.E."/>
            <person name="Bobst C."/>
            <person name="Torres y Torres J.L."/>
            <person name="Peres C."/>
            <person name="Harrison F.H."/>
            <person name="Gibson J."/>
            <person name="Harwood C.S."/>
        </authorList>
    </citation>
    <scope>NUCLEOTIDE SEQUENCE [LARGE SCALE GENOMIC DNA]</scope>
    <source>
        <strain>ATCC BAA-98 / CGA009</strain>
    </source>
</reference>
<sequence length="248" mass="26941">MAGHSQFKNIMHRKGRQDAQRSKLFSKLAREITVAAKLGTPDPAMNPRLRAAVLAARAENMPKDNIERAIKKAIGGDSENYDEIRYEGYGPGGVAVIVEALTDNRNRAASDIRSFFTKSGGNLGETGSVSFMFDRTGIIEYDADKASADDMLDAAIEAGADDVVSSEAGHEIYASQETFRDVAKALEAKFGEARKAAVIWKPQNTVAVDDETGEKLFKLMDALNDHDDVQNVYANFEVSDALMAKMAG</sequence>
<comment type="subcellular location">
    <subcellularLocation>
        <location evidence="1">Cytoplasm</location>
    </subcellularLocation>
</comment>
<comment type="similarity">
    <text evidence="1">Belongs to the TACO1 family.</text>
</comment>
<evidence type="ECO:0000255" key="1">
    <source>
        <dbReference type="HAMAP-Rule" id="MF_00693"/>
    </source>
</evidence>
<evidence type="ECO:0000256" key="2">
    <source>
        <dbReference type="SAM" id="MobiDB-lite"/>
    </source>
</evidence>
<feature type="chain" id="PRO_0000175877" description="Probable transcriptional regulatory protein RPA1097">
    <location>
        <begin position="1"/>
        <end position="248"/>
    </location>
</feature>
<feature type="region of interest" description="Disordered" evidence="2">
    <location>
        <begin position="1"/>
        <end position="21"/>
    </location>
</feature>
<gene>
    <name type="ordered locus">RPA1097</name>
</gene>
<organism>
    <name type="scientific">Rhodopseudomonas palustris (strain ATCC BAA-98 / CGA009)</name>
    <dbReference type="NCBI Taxonomy" id="258594"/>
    <lineage>
        <taxon>Bacteria</taxon>
        <taxon>Pseudomonadati</taxon>
        <taxon>Pseudomonadota</taxon>
        <taxon>Alphaproteobacteria</taxon>
        <taxon>Hyphomicrobiales</taxon>
        <taxon>Nitrobacteraceae</taxon>
        <taxon>Rhodopseudomonas</taxon>
    </lineage>
</organism>
<accession>P62040</accession>